<organism>
    <name type="scientific">Polaromonas sp. (strain JS666 / ATCC BAA-500)</name>
    <dbReference type="NCBI Taxonomy" id="296591"/>
    <lineage>
        <taxon>Bacteria</taxon>
        <taxon>Pseudomonadati</taxon>
        <taxon>Pseudomonadota</taxon>
        <taxon>Betaproteobacteria</taxon>
        <taxon>Burkholderiales</taxon>
        <taxon>Comamonadaceae</taxon>
        <taxon>Polaromonas</taxon>
    </lineage>
</organism>
<gene>
    <name type="ordered locus">Bpro_2333</name>
</gene>
<comment type="catalytic activity">
    <reaction evidence="1">
        <text>2 reduced [2Fe-2S]-[ferredoxin] + NADP(+) + H(+) = 2 oxidized [2Fe-2S]-[ferredoxin] + NADPH</text>
        <dbReference type="Rhea" id="RHEA:20125"/>
        <dbReference type="Rhea" id="RHEA-COMP:10000"/>
        <dbReference type="Rhea" id="RHEA-COMP:10001"/>
        <dbReference type="ChEBI" id="CHEBI:15378"/>
        <dbReference type="ChEBI" id="CHEBI:33737"/>
        <dbReference type="ChEBI" id="CHEBI:33738"/>
        <dbReference type="ChEBI" id="CHEBI:57783"/>
        <dbReference type="ChEBI" id="CHEBI:58349"/>
        <dbReference type="EC" id="1.18.1.2"/>
    </reaction>
</comment>
<comment type="cofactor">
    <cofactor evidence="1">
        <name>FAD</name>
        <dbReference type="ChEBI" id="CHEBI:57692"/>
    </cofactor>
    <text evidence="1">Binds 1 FAD per subunit.</text>
</comment>
<comment type="subunit">
    <text evidence="1">Homodimer.</text>
</comment>
<comment type="similarity">
    <text evidence="1">Belongs to the ferredoxin--NADP reductase type 2 family.</text>
</comment>
<feature type="chain" id="PRO_0000364899" description="Ferredoxin--NADP reductase">
    <location>
        <begin position="1"/>
        <end position="366"/>
    </location>
</feature>
<feature type="binding site" evidence="1">
    <location>
        <position position="51"/>
    </location>
    <ligand>
        <name>FAD</name>
        <dbReference type="ChEBI" id="CHEBI:57692"/>
    </ligand>
</feature>
<feature type="binding site" evidence="1">
    <location>
        <position position="59"/>
    </location>
    <ligand>
        <name>FAD</name>
        <dbReference type="ChEBI" id="CHEBI:57692"/>
    </ligand>
</feature>
<feature type="binding site" evidence="1">
    <location>
        <position position="64"/>
    </location>
    <ligand>
        <name>FAD</name>
        <dbReference type="ChEBI" id="CHEBI:57692"/>
    </ligand>
</feature>
<feature type="binding site" evidence="1">
    <location>
        <position position="104"/>
    </location>
    <ligand>
        <name>FAD</name>
        <dbReference type="ChEBI" id="CHEBI:57692"/>
    </ligand>
</feature>
<feature type="binding site" evidence="1">
    <location>
        <position position="139"/>
    </location>
    <ligand>
        <name>FAD</name>
        <dbReference type="ChEBI" id="CHEBI:57692"/>
    </ligand>
</feature>
<feature type="binding site" evidence="1">
    <location>
        <position position="308"/>
    </location>
    <ligand>
        <name>FAD</name>
        <dbReference type="ChEBI" id="CHEBI:57692"/>
    </ligand>
</feature>
<feature type="binding site" evidence="1">
    <location>
        <position position="349"/>
    </location>
    <ligand>
        <name>FAD</name>
        <dbReference type="ChEBI" id="CHEBI:57692"/>
    </ligand>
</feature>
<name>FENR_POLSJ</name>
<accession>Q12B36</accession>
<dbReference type="EC" id="1.18.1.2" evidence="1"/>
<dbReference type="EMBL" id="CP000316">
    <property type="protein sequence ID" value="ABE44256.1"/>
    <property type="molecule type" value="Genomic_DNA"/>
</dbReference>
<dbReference type="RefSeq" id="WP_011483254.1">
    <property type="nucleotide sequence ID" value="NC_007948.1"/>
</dbReference>
<dbReference type="SMR" id="Q12B36"/>
<dbReference type="STRING" id="296591.Bpro_2333"/>
<dbReference type="KEGG" id="pol:Bpro_2333"/>
<dbReference type="eggNOG" id="COG0492">
    <property type="taxonomic scope" value="Bacteria"/>
</dbReference>
<dbReference type="HOGENOM" id="CLU_031864_5_5_4"/>
<dbReference type="OrthoDB" id="9806179at2"/>
<dbReference type="Proteomes" id="UP000001983">
    <property type="component" value="Chromosome"/>
</dbReference>
<dbReference type="GO" id="GO:0004324">
    <property type="term" value="F:ferredoxin-NADP+ reductase activity"/>
    <property type="evidence" value="ECO:0007669"/>
    <property type="project" value="UniProtKB-UniRule"/>
</dbReference>
<dbReference type="GO" id="GO:0050660">
    <property type="term" value="F:flavin adenine dinucleotide binding"/>
    <property type="evidence" value="ECO:0007669"/>
    <property type="project" value="UniProtKB-UniRule"/>
</dbReference>
<dbReference type="GO" id="GO:0050661">
    <property type="term" value="F:NADP binding"/>
    <property type="evidence" value="ECO:0007669"/>
    <property type="project" value="UniProtKB-UniRule"/>
</dbReference>
<dbReference type="Gene3D" id="3.50.50.60">
    <property type="entry name" value="FAD/NAD(P)-binding domain"/>
    <property type="match status" value="2"/>
</dbReference>
<dbReference type="HAMAP" id="MF_01685">
    <property type="entry name" value="FENR2"/>
    <property type="match status" value="1"/>
</dbReference>
<dbReference type="InterPro" id="IPR036188">
    <property type="entry name" value="FAD/NAD-bd_sf"/>
</dbReference>
<dbReference type="InterPro" id="IPR023753">
    <property type="entry name" value="FAD/NAD-binding_dom"/>
</dbReference>
<dbReference type="InterPro" id="IPR022890">
    <property type="entry name" value="Fd--NADP_Rdtase_type_2"/>
</dbReference>
<dbReference type="InterPro" id="IPR050097">
    <property type="entry name" value="Ferredoxin-NADP_redctase_2"/>
</dbReference>
<dbReference type="PANTHER" id="PTHR48105">
    <property type="entry name" value="THIOREDOXIN REDUCTASE 1-RELATED-RELATED"/>
    <property type="match status" value="1"/>
</dbReference>
<dbReference type="Pfam" id="PF07992">
    <property type="entry name" value="Pyr_redox_2"/>
    <property type="match status" value="1"/>
</dbReference>
<dbReference type="PRINTS" id="PR00368">
    <property type="entry name" value="FADPNR"/>
</dbReference>
<dbReference type="PRINTS" id="PR00469">
    <property type="entry name" value="PNDRDTASEII"/>
</dbReference>
<dbReference type="SUPFAM" id="SSF51905">
    <property type="entry name" value="FAD/NAD(P)-binding domain"/>
    <property type="match status" value="2"/>
</dbReference>
<proteinExistence type="inferred from homology"/>
<sequence>MEPQLNQEVINTAAQHDGPIETDAVIVGAGPVGLFQVFELGLLEIKAHVIDSLAYPGGQCIELYPDKPIYDIPAVPMCTGKELTDSLLKQIEPFGATFHFGQEVSVVEKQEDGRFFVETSKGTKFLTKTIFIAAGVGAFQPKLLRVDGLDQFDNTQLFYRVKNPADFAGKNLVIVGGGDSALDWALNFVAEGPNKAESVILVHRRDGFKAAPASVAKMKELCDAYEMQFIVGQVTGYDEKNGKMTGAKVTGADGVTRVVPLDVLLVFFGLSPKLGPIAHWGLDIERKQLMVDTEKFSTNIPGIFAVGDINTYPGKKKLILSGFHECALAAFGAAPFIFPDKKIHLQYTTTSPKLHKVLGVESPVFD</sequence>
<keyword id="KW-0274">FAD</keyword>
<keyword id="KW-0285">Flavoprotein</keyword>
<keyword id="KW-0521">NADP</keyword>
<keyword id="KW-0560">Oxidoreductase</keyword>
<keyword id="KW-1185">Reference proteome</keyword>
<reference key="1">
    <citation type="journal article" date="2008" name="Appl. Environ. Microbiol.">
        <title>The genome of Polaromonas sp. strain JS666: insights into the evolution of a hydrocarbon- and xenobiotic-degrading bacterium, and features of relevance to biotechnology.</title>
        <authorList>
            <person name="Mattes T.E."/>
            <person name="Alexander A.K."/>
            <person name="Richardson P.M."/>
            <person name="Munk A.C."/>
            <person name="Han C.S."/>
            <person name="Stothard P."/>
            <person name="Coleman N.V."/>
        </authorList>
    </citation>
    <scope>NUCLEOTIDE SEQUENCE [LARGE SCALE GENOMIC DNA]</scope>
    <source>
        <strain>JS666 / ATCC BAA-500</strain>
    </source>
</reference>
<evidence type="ECO:0000255" key="1">
    <source>
        <dbReference type="HAMAP-Rule" id="MF_01685"/>
    </source>
</evidence>
<protein>
    <recommendedName>
        <fullName evidence="1">Ferredoxin--NADP reductase</fullName>
        <shortName evidence="1">FNR</shortName>
        <shortName evidence="1">Fd-NADP(+) reductase</shortName>
        <ecNumber evidence="1">1.18.1.2</ecNumber>
    </recommendedName>
</protein>